<feature type="chain" id="PRO_1000085530" description="Protein-methionine-sulfoxide reductase heme-binding subunit MsrQ">
    <location>
        <begin position="1"/>
        <end position="203"/>
    </location>
</feature>
<feature type="transmembrane region" description="Helical" evidence="1">
    <location>
        <begin position="10"/>
        <end position="30"/>
    </location>
</feature>
<feature type="transmembrane region" description="Helical" evidence="1">
    <location>
        <begin position="42"/>
        <end position="62"/>
    </location>
</feature>
<feature type="transmembrane region" description="Helical" evidence="1">
    <location>
        <begin position="75"/>
        <end position="95"/>
    </location>
</feature>
<feature type="transmembrane region" description="Helical" evidence="1">
    <location>
        <begin position="110"/>
        <end position="130"/>
    </location>
</feature>
<feature type="transmembrane region" description="Helical" evidence="1">
    <location>
        <begin position="147"/>
        <end position="167"/>
    </location>
</feature>
<feature type="transmembrane region" description="Helical" evidence="1">
    <location>
        <begin position="169"/>
        <end position="189"/>
    </location>
</feature>
<dbReference type="EMBL" id="CP000926">
    <property type="protein sequence ID" value="ABZ00560.1"/>
    <property type="molecule type" value="Genomic_DNA"/>
</dbReference>
<dbReference type="RefSeq" id="WP_012274209.1">
    <property type="nucleotide sequence ID" value="NC_010322.1"/>
</dbReference>
<dbReference type="SMR" id="B0KHT9"/>
<dbReference type="KEGG" id="ppg:PputGB1_4673"/>
<dbReference type="eggNOG" id="COG2717">
    <property type="taxonomic scope" value="Bacteria"/>
</dbReference>
<dbReference type="HOGENOM" id="CLU_080662_2_0_6"/>
<dbReference type="Proteomes" id="UP000002157">
    <property type="component" value="Chromosome"/>
</dbReference>
<dbReference type="GO" id="GO:0005886">
    <property type="term" value="C:plasma membrane"/>
    <property type="evidence" value="ECO:0007669"/>
    <property type="project" value="UniProtKB-SubCell"/>
</dbReference>
<dbReference type="GO" id="GO:0009055">
    <property type="term" value="F:electron transfer activity"/>
    <property type="evidence" value="ECO:0007669"/>
    <property type="project" value="UniProtKB-UniRule"/>
</dbReference>
<dbReference type="GO" id="GO:0010181">
    <property type="term" value="F:FMN binding"/>
    <property type="evidence" value="ECO:0007669"/>
    <property type="project" value="UniProtKB-UniRule"/>
</dbReference>
<dbReference type="GO" id="GO:0020037">
    <property type="term" value="F:heme binding"/>
    <property type="evidence" value="ECO:0007669"/>
    <property type="project" value="UniProtKB-UniRule"/>
</dbReference>
<dbReference type="GO" id="GO:0046872">
    <property type="term" value="F:metal ion binding"/>
    <property type="evidence" value="ECO:0007669"/>
    <property type="project" value="UniProtKB-KW"/>
</dbReference>
<dbReference type="GO" id="GO:0016679">
    <property type="term" value="F:oxidoreductase activity, acting on diphenols and related substances as donors"/>
    <property type="evidence" value="ECO:0007669"/>
    <property type="project" value="TreeGrafter"/>
</dbReference>
<dbReference type="GO" id="GO:0030091">
    <property type="term" value="P:protein repair"/>
    <property type="evidence" value="ECO:0007669"/>
    <property type="project" value="UniProtKB-UniRule"/>
</dbReference>
<dbReference type="HAMAP" id="MF_01207">
    <property type="entry name" value="MsrQ"/>
    <property type="match status" value="1"/>
</dbReference>
<dbReference type="InterPro" id="IPR013130">
    <property type="entry name" value="Fe3_Rdtase_TM_dom"/>
</dbReference>
<dbReference type="InterPro" id="IPR022837">
    <property type="entry name" value="MsrQ-like"/>
</dbReference>
<dbReference type="NCBIfam" id="NF003831">
    <property type="entry name" value="PRK05419.1-2"/>
    <property type="match status" value="1"/>
</dbReference>
<dbReference type="PANTHER" id="PTHR36964">
    <property type="entry name" value="PROTEIN-METHIONINE-SULFOXIDE REDUCTASE HEME-BINDING SUBUNIT MSRQ"/>
    <property type="match status" value="1"/>
</dbReference>
<dbReference type="PANTHER" id="PTHR36964:SF1">
    <property type="entry name" value="PROTEIN-METHIONINE-SULFOXIDE REDUCTASE HEME-BINDING SUBUNIT MSRQ"/>
    <property type="match status" value="1"/>
</dbReference>
<dbReference type="Pfam" id="PF01794">
    <property type="entry name" value="Ferric_reduct"/>
    <property type="match status" value="1"/>
</dbReference>
<organism>
    <name type="scientific">Pseudomonas putida (strain GB-1)</name>
    <dbReference type="NCBI Taxonomy" id="76869"/>
    <lineage>
        <taxon>Bacteria</taxon>
        <taxon>Pseudomonadati</taxon>
        <taxon>Pseudomonadota</taxon>
        <taxon>Gammaproteobacteria</taxon>
        <taxon>Pseudomonadales</taxon>
        <taxon>Pseudomonadaceae</taxon>
        <taxon>Pseudomonas</taxon>
    </lineage>
</organism>
<comment type="function">
    <text evidence="1">Part of the MsrPQ system that repairs oxidized periplasmic proteins containing methionine sulfoxide residues (Met-O), using respiratory chain electrons. Thus protects these proteins from oxidative-stress damage caused by reactive species of oxygen and chlorine generated by the host defense mechanisms. MsrPQ is essential for the maintenance of envelope integrity under bleach stress, rescuing a wide series of structurally unrelated periplasmic proteins from methionine oxidation. MsrQ provides electrons for reduction to the reductase catalytic subunit MsrP, using the quinone pool of the respiratory chain.</text>
</comment>
<comment type="cofactor">
    <cofactor evidence="1">
        <name>FMN</name>
        <dbReference type="ChEBI" id="CHEBI:58210"/>
    </cofactor>
    <text evidence="1">Binds 1 FMN per subunit.</text>
</comment>
<comment type="cofactor">
    <cofactor evidence="1">
        <name>heme b</name>
        <dbReference type="ChEBI" id="CHEBI:60344"/>
    </cofactor>
    <text evidence="1">Binds 1 heme b (iron(II)-protoporphyrin IX) group per subunit.</text>
</comment>
<comment type="subunit">
    <text evidence="1">Heterodimer of a catalytic subunit (MsrP) and a heme-binding subunit (MsrQ).</text>
</comment>
<comment type="subcellular location">
    <subcellularLocation>
        <location evidence="1">Cell inner membrane</location>
        <topology evidence="1">Multi-pass membrane protein</topology>
    </subcellularLocation>
</comment>
<comment type="similarity">
    <text evidence="1">Belongs to the MsrQ family.</text>
</comment>
<protein>
    <recommendedName>
        <fullName evidence="1">Protein-methionine-sulfoxide reductase heme-binding subunit MsrQ</fullName>
    </recommendedName>
    <alternativeName>
        <fullName evidence="1">Flavocytochrome MsrQ</fullName>
    </alternativeName>
</protein>
<name>MSRQ_PSEPG</name>
<evidence type="ECO:0000255" key="1">
    <source>
        <dbReference type="HAMAP-Rule" id="MF_01207"/>
    </source>
</evidence>
<proteinExistence type="inferred from homology"/>
<accession>B0KHT9</accession>
<reference key="1">
    <citation type="submission" date="2008-01" db="EMBL/GenBank/DDBJ databases">
        <title>Complete sequence of Pseudomonas putida GB-1.</title>
        <authorList>
            <consortium name="US DOE Joint Genome Institute"/>
            <person name="Copeland A."/>
            <person name="Lucas S."/>
            <person name="Lapidus A."/>
            <person name="Barry K."/>
            <person name="Glavina del Rio T."/>
            <person name="Dalin E."/>
            <person name="Tice H."/>
            <person name="Pitluck S."/>
            <person name="Bruce D."/>
            <person name="Goodwin L."/>
            <person name="Chertkov O."/>
            <person name="Brettin T."/>
            <person name="Detter J.C."/>
            <person name="Han C."/>
            <person name="Kuske C.R."/>
            <person name="Schmutz J."/>
            <person name="Larimer F."/>
            <person name="Land M."/>
            <person name="Hauser L."/>
            <person name="Kyrpides N."/>
            <person name="Kim E."/>
            <person name="McCarthy J.K."/>
            <person name="Richardson P."/>
        </authorList>
    </citation>
    <scope>NUCLEOTIDE SEQUENCE [LARGE SCALE GENOMIC DNA]</scope>
    <source>
        <strain>GB-1</strain>
    </source>
</reference>
<gene>
    <name evidence="1" type="primary">msrQ</name>
    <name type="ordered locus">PputGB1_4673</name>
</gene>
<sequence>MRYPWFRLAIFVVGCLFPAWWLYEAAMSLLGPDPGKIMMDRLGLGALTFLLVTLCMTPLQKLTGWSGWIVVRRQLGLWVFAYIVLHILAYLFFILGLDWGQLAVELRKRPYIIVGALGFLGLLVLAITSNRYSQRRLGARWKKLHRLVYAVLGLGLLHFLWIVRSDLREWSIYALIGAVLMVLRIPAVARGLPRVARARGRAV</sequence>
<keyword id="KW-0997">Cell inner membrane</keyword>
<keyword id="KW-1003">Cell membrane</keyword>
<keyword id="KW-0249">Electron transport</keyword>
<keyword id="KW-0285">Flavoprotein</keyword>
<keyword id="KW-0288">FMN</keyword>
<keyword id="KW-0349">Heme</keyword>
<keyword id="KW-0408">Iron</keyword>
<keyword id="KW-0472">Membrane</keyword>
<keyword id="KW-0479">Metal-binding</keyword>
<keyword id="KW-0812">Transmembrane</keyword>
<keyword id="KW-1133">Transmembrane helix</keyword>
<keyword id="KW-0813">Transport</keyword>